<sequence length="340" mass="36202">MTELQPIAVLGGGSFGTALANLLAENGQRVLQWMRDPEQAGQMRRSGENPRYLKGVKLHPGIEPTSDLGAALQQAELVFVALPSSALRDALQPVAAQLSGKMLVSTTKGIEARTFKLMSEILEEIAPDARIGVLSGPNLAKEVADHALTATVIASEDEELCLRVQQALHGRTFRVYASADRFGVELGGALKNVYAIMSGMAAALGMGENTKSMLITRALAEMTRFAVKLGANPMTFLGLAGVGDLIVTCSSPKSRNYQVGFALGEGLSLDEAVQRLGEVAEGVNTLKVLKARAEELEVYMPLVAGLHAVLFEGRTLAQVIELLMRGEPKTDVDFIPTAGF</sequence>
<evidence type="ECO:0000255" key="1">
    <source>
        <dbReference type="HAMAP-Rule" id="MF_00394"/>
    </source>
</evidence>
<proteinExistence type="inferred from homology"/>
<organism>
    <name type="scientific">Ectopseudomonas mendocina (strain ymp)</name>
    <name type="common">Pseudomonas mendocina</name>
    <dbReference type="NCBI Taxonomy" id="399739"/>
    <lineage>
        <taxon>Bacteria</taxon>
        <taxon>Pseudomonadati</taxon>
        <taxon>Pseudomonadota</taxon>
        <taxon>Gammaproteobacteria</taxon>
        <taxon>Pseudomonadales</taxon>
        <taxon>Pseudomonadaceae</taxon>
        <taxon>Ectopseudomonas</taxon>
    </lineage>
</organism>
<comment type="function">
    <text evidence="1">Catalyzes the reduction of the glycolytic intermediate dihydroxyacetone phosphate (DHAP) to sn-glycerol 3-phosphate (G3P), the key precursor for phospholipid synthesis.</text>
</comment>
<comment type="catalytic activity">
    <reaction evidence="1">
        <text>sn-glycerol 3-phosphate + NAD(+) = dihydroxyacetone phosphate + NADH + H(+)</text>
        <dbReference type="Rhea" id="RHEA:11092"/>
        <dbReference type="ChEBI" id="CHEBI:15378"/>
        <dbReference type="ChEBI" id="CHEBI:57540"/>
        <dbReference type="ChEBI" id="CHEBI:57597"/>
        <dbReference type="ChEBI" id="CHEBI:57642"/>
        <dbReference type="ChEBI" id="CHEBI:57945"/>
        <dbReference type="EC" id="1.1.1.94"/>
    </reaction>
    <physiologicalReaction direction="right-to-left" evidence="1">
        <dbReference type="Rhea" id="RHEA:11094"/>
    </physiologicalReaction>
</comment>
<comment type="catalytic activity">
    <reaction evidence="1">
        <text>sn-glycerol 3-phosphate + NADP(+) = dihydroxyacetone phosphate + NADPH + H(+)</text>
        <dbReference type="Rhea" id="RHEA:11096"/>
        <dbReference type="ChEBI" id="CHEBI:15378"/>
        <dbReference type="ChEBI" id="CHEBI:57597"/>
        <dbReference type="ChEBI" id="CHEBI:57642"/>
        <dbReference type="ChEBI" id="CHEBI:57783"/>
        <dbReference type="ChEBI" id="CHEBI:58349"/>
        <dbReference type="EC" id="1.1.1.94"/>
    </reaction>
    <physiologicalReaction direction="right-to-left" evidence="1">
        <dbReference type="Rhea" id="RHEA:11098"/>
    </physiologicalReaction>
</comment>
<comment type="pathway">
    <text evidence="1">Membrane lipid metabolism; glycerophospholipid metabolism.</text>
</comment>
<comment type="subcellular location">
    <subcellularLocation>
        <location evidence="1">Cytoplasm</location>
    </subcellularLocation>
</comment>
<comment type="similarity">
    <text evidence="1">Belongs to the NAD-dependent glycerol-3-phosphate dehydrogenase family.</text>
</comment>
<gene>
    <name evidence="1" type="primary">gpsA</name>
    <name type="ordered locus">Pmen_2467</name>
</gene>
<reference key="1">
    <citation type="submission" date="2007-04" db="EMBL/GenBank/DDBJ databases">
        <title>Complete sequence of Pseudomonas mendocina ymp.</title>
        <authorList>
            <consortium name="US DOE Joint Genome Institute"/>
            <person name="Copeland A."/>
            <person name="Lucas S."/>
            <person name="Lapidus A."/>
            <person name="Barry K."/>
            <person name="Glavina del Rio T."/>
            <person name="Dalin E."/>
            <person name="Tice H."/>
            <person name="Pitluck S."/>
            <person name="Kiss H."/>
            <person name="Brettin T."/>
            <person name="Detter J.C."/>
            <person name="Bruce D."/>
            <person name="Han C."/>
            <person name="Schmutz J."/>
            <person name="Larimer F."/>
            <person name="Land M."/>
            <person name="Hauser L."/>
            <person name="Kyrpides N."/>
            <person name="Mikhailova N."/>
            <person name="Hersman L."/>
            <person name="Dubois J."/>
            <person name="Maurice P."/>
            <person name="Richardson P."/>
        </authorList>
    </citation>
    <scope>NUCLEOTIDE SEQUENCE [LARGE SCALE GENOMIC DNA]</scope>
    <source>
        <strain>ymp</strain>
    </source>
</reference>
<keyword id="KW-0963">Cytoplasm</keyword>
<keyword id="KW-0444">Lipid biosynthesis</keyword>
<keyword id="KW-0443">Lipid metabolism</keyword>
<keyword id="KW-0520">NAD</keyword>
<keyword id="KW-0521">NADP</keyword>
<keyword id="KW-0547">Nucleotide-binding</keyword>
<keyword id="KW-0560">Oxidoreductase</keyword>
<keyword id="KW-0594">Phospholipid biosynthesis</keyword>
<keyword id="KW-1208">Phospholipid metabolism</keyword>
<protein>
    <recommendedName>
        <fullName evidence="1">Glycerol-3-phosphate dehydrogenase [NAD(P)+]</fullName>
        <ecNumber evidence="1">1.1.1.94</ecNumber>
    </recommendedName>
    <alternativeName>
        <fullName evidence="1">NAD(P)(+)-dependent glycerol-3-phosphate dehydrogenase</fullName>
    </alternativeName>
    <alternativeName>
        <fullName evidence="1">NAD(P)H-dependent dihydroxyacetone-phosphate reductase</fullName>
    </alternativeName>
</protein>
<accession>A4XV57</accession>
<dbReference type="EC" id="1.1.1.94" evidence="1"/>
<dbReference type="EMBL" id="CP000680">
    <property type="protein sequence ID" value="ABP85223.1"/>
    <property type="molecule type" value="Genomic_DNA"/>
</dbReference>
<dbReference type="SMR" id="A4XV57"/>
<dbReference type="STRING" id="399739.Pmen_2467"/>
<dbReference type="KEGG" id="pmy:Pmen_2467"/>
<dbReference type="PATRIC" id="fig|399739.8.peg.2492"/>
<dbReference type="eggNOG" id="COG0240">
    <property type="taxonomic scope" value="Bacteria"/>
</dbReference>
<dbReference type="HOGENOM" id="CLU_033449_0_2_6"/>
<dbReference type="OrthoDB" id="9812273at2"/>
<dbReference type="UniPathway" id="UPA00940"/>
<dbReference type="GO" id="GO:0005829">
    <property type="term" value="C:cytosol"/>
    <property type="evidence" value="ECO:0007669"/>
    <property type="project" value="TreeGrafter"/>
</dbReference>
<dbReference type="GO" id="GO:0047952">
    <property type="term" value="F:glycerol-3-phosphate dehydrogenase [NAD(P)+] activity"/>
    <property type="evidence" value="ECO:0007669"/>
    <property type="project" value="UniProtKB-UniRule"/>
</dbReference>
<dbReference type="GO" id="GO:0051287">
    <property type="term" value="F:NAD binding"/>
    <property type="evidence" value="ECO:0007669"/>
    <property type="project" value="InterPro"/>
</dbReference>
<dbReference type="GO" id="GO:0005975">
    <property type="term" value="P:carbohydrate metabolic process"/>
    <property type="evidence" value="ECO:0007669"/>
    <property type="project" value="InterPro"/>
</dbReference>
<dbReference type="GO" id="GO:0046167">
    <property type="term" value="P:glycerol-3-phosphate biosynthetic process"/>
    <property type="evidence" value="ECO:0007669"/>
    <property type="project" value="UniProtKB-UniRule"/>
</dbReference>
<dbReference type="GO" id="GO:0046168">
    <property type="term" value="P:glycerol-3-phosphate catabolic process"/>
    <property type="evidence" value="ECO:0007669"/>
    <property type="project" value="InterPro"/>
</dbReference>
<dbReference type="GO" id="GO:0046474">
    <property type="term" value="P:glycerophospholipid biosynthetic process"/>
    <property type="evidence" value="ECO:0007669"/>
    <property type="project" value="TreeGrafter"/>
</dbReference>
<dbReference type="FunFam" id="1.10.1040.10:FF:000001">
    <property type="entry name" value="Glycerol-3-phosphate dehydrogenase [NAD(P)+]"/>
    <property type="match status" value="1"/>
</dbReference>
<dbReference type="FunFam" id="3.40.50.720:FF:000019">
    <property type="entry name" value="Glycerol-3-phosphate dehydrogenase [NAD(P)+]"/>
    <property type="match status" value="1"/>
</dbReference>
<dbReference type="Gene3D" id="1.10.1040.10">
    <property type="entry name" value="N-(1-d-carboxylethyl)-l-norvaline Dehydrogenase, domain 2"/>
    <property type="match status" value="1"/>
</dbReference>
<dbReference type="Gene3D" id="3.40.50.720">
    <property type="entry name" value="NAD(P)-binding Rossmann-like Domain"/>
    <property type="match status" value="1"/>
</dbReference>
<dbReference type="HAMAP" id="MF_00394">
    <property type="entry name" value="NAD_Glyc3P_dehydrog"/>
    <property type="match status" value="1"/>
</dbReference>
<dbReference type="InterPro" id="IPR008927">
    <property type="entry name" value="6-PGluconate_DH-like_C_sf"/>
</dbReference>
<dbReference type="InterPro" id="IPR013328">
    <property type="entry name" value="6PGD_dom2"/>
</dbReference>
<dbReference type="InterPro" id="IPR006168">
    <property type="entry name" value="G3P_DH_NAD-dep"/>
</dbReference>
<dbReference type="InterPro" id="IPR006109">
    <property type="entry name" value="G3P_DH_NAD-dep_C"/>
</dbReference>
<dbReference type="InterPro" id="IPR011128">
    <property type="entry name" value="G3P_DH_NAD-dep_N"/>
</dbReference>
<dbReference type="InterPro" id="IPR036291">
    <property type="entry name" value="NAD(P)-bd_dom_sf"/>
</dbReference>
<dbReference type="NCBIfam" id="NF000940">
    <property type="entry name" value="PRK00094.1-2"/>
    <property type="match status" value="1"/>
</dbReference>
<dbReference type="NCBIfam" id="NF000942">
    <property type="entry name" value="PRK00094.1-4"/>
    <property type="match status" value="1"/>
</dbReference>
<dbReference type="NCBIfam" id="NF000946">
    <property type="entry name" value="PRK00094.2-4"/>
    <property type="match status" value="1"/>
</dbReference>
<dbReference type="PANTHER" id="PTHR11728">
    <property type="entry name" value="GLYCEROL-3-PHOSPHATE DEHYDROGENASE"/>
    <property type="match status" value="1"/>
</dbReference>
<dbReference type="PANTHER" id="PTHR11728:SF1">
    <property type="entry name" value="GLYCEROL-3-PHOSPHATE DEHYDROGENASE [NAD(+)] 2, CHLOROPLASTIC"/>
    <property type="match status" value="1"/>
</dbReference>
<dbReference type="Pfam" id="PF07479">
    <property type="entry name" value="NAD_Gly3P_dh_C"/>
    <property type="match status" value="1"/>
</dbReference>
<dbReference type="Pfam" id="PF01210">
    <property type="entry name" value="NAD_Gly3P_dh_N"/>
    <property type="match status" value="1"/>
</dbReference>
<dbReference type="PIRSF" id="PIRSF000114">
    <property type="entry name" value="Glycerol-3-P_dh"/>
    <property type="match status" value="1"/>
</dbReference>
<dbReference type="PRINTS" id="PR00077">
    <property type="entry name" value="GPDHDRGNASE"/>
</dbReference>
<dbReference type="SUPFAM" id="SSF48179">
    <property type="entry name" value="6-phosphogluconate dehydrogenase C-terminal domain-like"/>
    <property type="match status" value="1"/>
</dbReference>
<dbReference type="SUPFAM" id="SSF51735">
    <property type="entry name" value="NAD(P)-binding Rossmann-fold domains"/>
    <property type="match status" value="1"/>
</dbReference>
<dbReference type="PROSITE" id="PS00957">
    <property type="entry name" value="NAD_G3PDH"/>
    <property type="match status" value="1"/>
</dbReference>
<feature type="chain" id="PRO_1000049538" description="Glycerol-3-phosphate dehydrogenase [NAD(P)+]">
    <location>
        <begin position="1"/>
        <end position="340"/>
    </location>
</feature>
<feature type="active site" description="Proton acceptor" evidence="1">
    <location>
        <position position="191"/>
    </location>
</feature>
<feature type="binding site" evidence="1">
    <location>
        <position position="14"/>
    </location>
    <ligand>
        <name>NADPH</name>
        <dbReference type="ChEBI" id="CHEBI:57783"/>
    </ligand>
</feature>
<feature type="binding site" evidence="1">
    <location>
        <position position="15"/>
    </location>
    <ligand>
        <name>NADPH</name>
        <dbReference type="ChEBI" id="CHEBI:57783"/>
    </ligand>
</feature>
<feature type="binding site" evidence="1">
    <location>
        <position position="35"/>
    </location>
    <ligand>
        <name>NADPH</name>
        <dbReference type="ChEBI" id="CHEBI:57783"/>
    </ligand>
</feature>
<feature type="binding site" evidence="1">
    <location>
        <position position="108"/>
    </location>
    <ligand>
        <name>NADPH</name>
        <dbReference type="ChEBI" id="CHEBI:57783"/>
    </ligand>
</feature>
<feature type="binding site" evidence="1">
    <location>
        <position position="108"/>
    </location>
    <ligand>
        <name>sn-glycerol 3-phosphate</name>
        <dbReference type="ChEBI" id="CHEBI:57597"/>
    </ligand>
</feature>
<feature type="binding site" evidence="1">
    <location>
        <position position="136"/>
    </location>
    <ligand>
        <name>sn-glycerol 3-phosphate</name>
        <dbReference type="ChEBI" id="CHEBI:57597"/>
    </ligand>
</feature>
<feature type="binding site" evidence="1">
    <location>
        <position position="140"/>
    </location>
    <ligand>
        <name>NADPH</name>
        <dbReference type="ChEBI" id="CHEBI:57783"/>
    </ligand>
</feature>
<feature type="binding site" evidence="1">
    <location>
        <position position="191"/>
    </location>
    <ligand>
        <name>sn-glycerol 3-phosphate</name>
        <dbReference type="ChEBI" id="CHEBI:57597"/>
    </ligand>
</feature>
<feature type="binding site" evidence="1">
    <location>
        <position position="244"/>
    </location>
    <ligand>
        <name>sn-glycerol 3-phosphate</name>
        <dbReference type="ChEBI" id="CHEBI:57597"/>
    </ligand>
</feature>
<feature type="binding site" evidence="1">
    <location>
        <position position="254"/>
    </location>
    <ligand>
        <name>sn-glycerol 3-phosphate</name>
        <dbReference type="ChEBI" id="CHEBI:57597"/>
    </ligand>
</feature>
<feature type="binding site" evidence="1">
    <location>
        <position position="255"/>
    </location>
    <ligand>
        <name>NADPH</name>
        <dbReference type="ChEBI" id="CHEBI:57783"/>
    </ligand>
</feature>
<feature type="binding site" evidence="1">
    <location>
        <position position="255"/>
    </location>
    <ligand>
        <name>sn-glycerol 3-phosphate</name>
        <dbReference type="ChEBI" id="CHEBI:57597"/>
    </ligand>
</feature>
<feature type="binding site" evidence="1">
    <location>
        <position position="256"/>
    </location>
    <ligand>
        <name>sn-glycerol 3-phosphate</name>
        <dbReference type="ChEBI" id="CHEBI:57597"/>
    </ligand>
</feature>
<feature type="binding site" evidence="1">
    <location>
        <position position="279"/>
    </location>
    <ligand>
        <name>NADPH</name>
        <dbReference type="ChEBI" id="CHEBI:57783"/>
    </ligand>
</feature>
<feature type="binding site" evidence="1">
    <location>
        <position position="281"/>
    </location>
    <ligand>
        <name>NADPH</name>
        <dbReference type="ChEBI" id="CHEBI:57783"/>
    </ligand>
</feature>
<name>GPDA_ECTM1</name>